<reference key="1">
    <citation type="journal article" date="2009" name="Peptides">
        <title>Identification, by RT-PCR, of four novel T-1-superfamily conotoxins from the vermivorous snail Conus spurius from the Gulf of Mexico.</title>
        <authorList>
            <person name="Zamora-Bustillos R."/>
            <person name="Aguilar M.B."/>
            <person name="Falcon A."/>
            <person name="Heimer de la Cotera E.P."/>
        </authorList>
    </citation>
    <scope>NUCLEOTIDE SEQUENCE [MRNA]</scope>
    <source>
        <tissue>Venom duct</tissue>
    </source>
</reference>
<feature type="signal peptide" evidence="2">
    <location>
        <begin position="1"/>
        <end position="19"/>
    </location>
</feature>
<feature type="propeptide" id="PRO_0000392717" evidence="1">
    <location>
        <begin position="20"/>
        <end position="29"/>
    </location>
</feature>
<feature type="peptide" id="PRO_0000392718" description="Conotoxin Sr5.5">
    <location>
        <begin position="32"/>
        <end position="44"/>
    </location>
</feature>
<sequence length="44" mass="4999">MRCLPVFVILLLLIASAPSVDDNAKGTQHKRIINWCCLTFYQCC</sequence>
<organism>
    <name type="scientific">Conus spurius</name>
    <name type="common">Alphabet cone</name>
    <dbReference type="NCBI Taxonomy" id="192919"/>
    <lineage>
        <taxon>Eukaryota</taxon>
        <taxon>Metazoa</taxon>
        <taxon>Spiralia</taxon>
        <taxon>Lophotrochozoa</taxon>
        <taxon>Mollusca</taxon>
        <taxon>Gastropoda</taxon>
        <taxon>Caenogastropoda</taxon>
        <taxon>Neogastropoda</taxon>
        <taxon>Conoidea</taxon>
        <taxon>Conidae</taxon>
        <taxon>Conus</taxon>
        <taxon>Lindaconus</taxon>
    </lineage>
</organism>
<keyword id="KW-0165">Cleavage on pair of basic residues</keyword>
<keyword id="KW-1015">Disulfide bond</keyword>
<keyword id="KW-0964">Secreted</keyword>
<keyword id="KW-0732">Signal</keyword>
<keyword id="KW-0800">Toxin</keyword>
<accession>C0KYC4</accession>
<dbReference type="EMBL" id="FJ646606">
    <property type="protein sequence ID" value="ACN22844.1"/>
    <property type="molecule type" value="mRNA"/>
</dbReference>
<dbReference type="ConoServer" id="3697">
    <property type="toxin name" value="Sr5.5 precursor"/>
</dbReference>
<dbReference type="GO" id="GO:0005576">
    <property type="term" value="C:extracellular region"/>
    <property type="evidence" value="ECO:0007669"/>
    <property type="project" value="UniProtKB-SubCell"/>
</dbReference>
<dbReference type="GO" id="GO:0090729">
    <property type="term" value="F:toxin activity"/>
    <property type="evidence" value="ECO:0007669"/>
    <property type="project" value="UniProtKB-KW"/>
</dbReference>
<dbReference type="InterPro" id="IPR031565">
    <property type="entry name" value="T-conotoxin"/>
</dbReference>
<dbReference type="Pfam" id="PF16981">
    <property type="entry name" value="Chi-conotoxin"/>
    <property type="match status" value="1"/>
</dbReference>
<name>CT55_CONSP</name>
<comment type="subcellular location">
    <subcellularLocation>
        <location evidence="5">Secreted</location>
    </subcellularLocation>
</comment>
<comment type="tissue specificity">
    <text evidence="5">Expressed by the venom duct.</text>
</comment>
<comment type="domain">
    <text evidence="4">The cysteine framework is V (CC-CC).</text>
</comment>
<comment type="PTM">
    <text evidence="4">Contains 2 disulfide bonds that can be either 'C1-C3, C2-C4' or 'C1-C4, C2-C3', since these disulfide connectivities have been observed for conotoxins with cysteine framework V (for examples, see AC P0DQQ7 and AC P81755).</text>
</comment>
<comment type="similarity">
    <text evidence="4">Belongs to the conotoxin T superfamily.</text>
</comment>
<protein>
    <recommendedName>
        <fullName evidence="3">Conotoxin Sr5.5</fullName>
    </recommendedName>
</protein>
<proteinExistence type="inferred from homology"/>
<evidence type="ECO:0000250" key="1"/>
<evidence type="ECO:0000255" key="2"/>
<evidence type="ECO:0000303" key="3">
    <source>
    </source>
</evidence>
<evidence type="ECO:0000305" key="4"/>
<evidence type="ECO:0000305" key="5">
    <source>
    </source>
</evidence>